<keyword id="KW-0071">Autoinducer synthesis</keyword>
<keyword id="KW-0673">Quorum sensing</keyword>
<keyword id="KW-0949">S-adenosyl-L-methionine</keyword>
<keyword id="KW-0808">Transferase</keyword>
<gene>
    <name type="primary">opaM</name>
    <name type="ordered locus">VP1967</name>
</gene>
<accession>Q87NA8</accession>
<accession>Q847W6</accession>
<organism>
    <name type="scientific">Vibrio parahaemolyticus serotype O3:K6 (strain RIMD 2210633)</name>
    <dbReference type="NCBI Taxonomy" id="223926"/>
    <lineage>
        <taxon>Bacteria</taxon>
        <taxon>Pseudomonadati</taxon>
        <taxon>Pseudomonadota</taxon>
        <taxon>Gammaproteobacteria</taxon>
        <taxon>Vibrionales</taxon>
        <taxon>Vibrionaceae</taxon>
        <taxon>Vibrio</taxon>
    </lineage>
</organism>
<protein>
    <recommendedName>
        <fullName>Acyl-homoserine-lactone synthase OpaM</fullName>
        <shortName>AHL synthase OpaM</shortName>
        <ecNumber>2.3.1.184</ecNumber>
    </recommendedName>
</protein>
<comment type="catalytic activity">
    <reaction>
        <text>a fatty acyl-[ACP] + S-adenosyl-L-methionine = an N-acyl-L-homoserine lactone + S-methyl-5'-thioadenosine + holo-[ACP] + H(+)</text>
        <dbReference type="Rhea" id="RHEA:10096"/>
        <dbReference type="Rhea" id="RHEA-COMP:9685"/>
        <dbReference type="Rhea" id="RHEA-COMP:14125"/>
        <dbReference type="ChEBI" id="CHEBI:15378"/>
        <dbReference type="ChEBI" id="CHEBI:17509"/>
        <dbReference type="ChEBI" id="CHEBI:55474"/>
        <dbReference type="ChEBI" id="CHEBI:59789"/>
        <dbReference type="ChEBI" id="CHEBI:64479"/>
        <dbReference type="ChEBI" id="CHEBI:138651"/>
        <dbReference type="EC" id="2.3.1.184"/>
    </reaction>
</comment>
<comment type="similarity">
    <text evidence="1">Belongs to the LuxM / VanM family.</text>
</comment>
<reference key="1">
    <citation type="submission" date="2003-01" db="EMBL/GenBank/DDBJ databases">
        <title>The opaMN operon of Vibrio parahaemolyticus encodes a homoserine lactone synthase and autoinducer sensor.</title>
        <authorList>
            <person name="Jaques S."/>
            <person name="McCarter L.L."/>
        </authorList>
    </citation>
    <scope>NUCLEOTIDE SEQUENCE [GENOMIC DNA]</scope>
    <source>
        <strain>BB22</strain>
    </source>
</reference>
<reference key="2">
    <citation type="journal article" date="2003" name="Lancet">
        <title>Genome sequence of Vibrio parahaemolyticus: a pathogenic mechanism distinct from that of V. cholerae.</title>
        <authorList>
            <person name="Makino K."/>
            <person name="Oshima K."/>
            <person name="Kurokawa K."/>
            <person name="Yokoyama K."/>
            <person name="Uda T."/>
            <person name="Tagomori K."/>
            <person name="Iijima Y."/>
            <person name="Najima M."/>
            <person name="Nakano M."/>
            <person name="Yamashita A."/>
            <person name="Kubota Y."/>
            <person name="Kimura S."/>
            <person name="Yasunaga T."/>
            <person name="Honda T."/>
            <person name="Shinagawa H."/>
            <person name="Hattori M."/>
            <person name="Iida T."/>
        </authorList>
    </citation>
    <scope>NUCLEOTIDE SEQUENCE [LARGE SCALE GENOMIC DNA]</scope>
    <source>
        <strain>RIMD 2210633</strain>
    </source>
</reference>
<sequence>MSLKLSLVSLSNTDLPIETKQQALIDIVLRFLTPQERASLFESITHQRETNLLARYPEYQSKSLSVLFELMDYRDLVRLDPNNLHDDVYLLELTVAECFPHWLDFWCACEIEAIKQKYSLENREPATELSFEDASYSAMLIDDISKSSMRVQLPSYPVAMTLSDAVALSNLELFVQGEKWYEILPLLSLSQKGKHFILLQTQTTPVLVASALIQDWNQRNTWLSYAPQFNSEKWRFCLPLHGYQELNRLDILASDLVTDYGSLTVFDQAFQTHITKTEMVCEVLRLTVSGSVQHKLYFLYLAQKELMNVLFQSGYKVGFTIIEQAFMLNFYQSIDSKAYFHSGYCDINGDGINTYRGFWNFESMVDTFKRTDFRDYKRRIRVIRQNTQVNEHA</sequence>
<dbReference type="EC" id="2.3.1.184"/>
<dbReference type="EMBL" id="AY216909">
    <property type="protein sequence ID" value="AAO61789.1"/>
    <property type="molecule type" value="Genomic_DNA"/>
</dbReference>
<dbReference type="EMBL" id="BA000031">
    <property type="protein sequence ID" value="BAC60230.1"/>
    <property type="molecule type" value="Genomic_DNA"/>
</dbReference>
<dbReference type="RefSeq" id="NP_798346.1">
    <property type="nucleotide sequence ID" value="NC_004603.1"/>
</dbReference>
<dbReference type="RefSeq" id="WP_005481636.1">
    <property type="nucleotide sequence ID" value="NC_004603.1"/>
</dbReference>
<dbReference type="GeneID" id="1189478"/>
<dbReference type="KEGG" id="vpa:VP1967"/>
<dbReference type="PATRIC" id="fig|223926.6.peg.1880"/>
<dbReference type="eggNOG" id="ENOG5031MRN">
    <property type="taxonomic scope" value="Bacteria"/>
</dbReference>
<dbReference type="HOGENOM" id="CLU_053516_0_0_6"/>
<dbReference type="Proteomes" id="UP000002493">
    <property type="component" value="Chromosome 1"/>
</dbReference>
<dbReference type="GO" id="GO:0061579">
    <property type="term" value="F:N-acyl homoserine lactone synthase activity"/>
    <property type="evidence" value="ECO:0007669"/>
    <property type="project" value="UniProtKB-EC"/>
</dbReference>
<dbReference type="GO" id="GO:0009372">
    <property type="term" value="P:quorum sensing"/>
    <property type="evidence" value="ECO:0007669"/>
    <property type="project" value="UniProtKB-KW"/>
</dbReference>
<dbReference type="InterPro" id="IPR035304">
    <property type="entry name" value="AHL_synthase"/>
</dbReference>
<dbReference type="Pfam" id="PF17327">
    <property type="entry name" value="AHL_synthase"/>
    <property type="match status" value="1"/>
</dbReference>
<feature type="chain" id="PRO_0000379487" description="Acyl-homoserine-lactone synthase OpaM">
    <location>
        <begin position="1"/>
        <end position="393"/>
    </location>
</feature>
<feature type="sequence conflict" description="In Ref. 1; AAO61789." evidence="1" ref="1">
    <original>D</original>
    <variation>H</variation>
    <location>
        <position position="80"/>
    </location>
</feature>
<feature type="sequence conflict" description="In Ref. 1; AAO61789." evidence="1" ref="1">
    <original>TV</original>
    <variation>IA</variation>
    <location>
        <begin position="94"/>
        <end position="95"/>
    </location>
</feature>
<feature type="sequence conflict" description="In Ref. 1; AAO61789." evidence="1" ref="1">
    <original>A</original>
    <variation>G</variation>
    <location>
        <position position="108"/>
    </location>
</feature>
<feature type="sequence conflict" description="In Ref. 1; AAO61789." evidence="1" ref="1">
    <original>M</original>
    <variation>T</variation>
    <location>
        <position position="279"/>
    </location>
</feature>
<evidence type="ECO:0000305" key="1"/>
<name>OPAM_VIBPA</name>
<proteinExistence type="inferred from homology"/>